<dbReference type="EMBL" id="AF485326">
    <property type="protein sequence ID" value="AAO49382.1"/>
    <property type="molecule type" value="mRNA"/>
</dbReference>
<dbReference type="EMBL" id="AB300618">
    <property type="protein sequence ID" value="BAF56597.1"/>
    <property type="molecule type" value="Genomic_DNA"/>
</dbReference>
<dbReference type="EMBL" id="BC103281">
    <property type="protein sequence ID" value="AAI03282.1"/>
    <property type="molecule type" value="mRNA"/>
</dbReference>
<dbReference type="EMBL" id="AF317803">
    <property type="protein sequence ID" value="AAK28063.1"/>
    <property type="molecule type" value="Genomic_DNA"/>
</dbReference>
<dbReference type="RefSeq" id="NP_803488.1">
    <property type="nucleotide sequence ID" value="NM_177522.2"/>
</dbReference>
<dbReference type="SMR" id="Q865F8"/>
<dbReference type="FunCoup" id="Q865F8">
    <property type="interactions" value="8"/>
</dbReference>
<dbReference type="STRING" id="9913.ENSBTAP00000008467"/>
<dbReference type="PaxDb" id="9913-ENSBTAP00000008467"/>
<dbReference type="GeneID" id="338381"/>
<dbReference type="KEGG" id="bta:338381"/>
<dbReference type="CTD" id="51327"/>
<dbReference type="VEuPathDB" id="HostDB:ENSBTAG00000006457"/>
<dbReference type="eggNOG" id="ENOG502SXDF">
    <property type="taxonomic scope" value="Eukaryota"/>
</dbReference>
<dbReference type="InParanoid" id="Q865F8"/>
<dbReference type="OMA" id="DWIKFYL"/>
<dbReference type="OrthoDB" id="9827643at2759"/>
<dbReference type="Proteomes" id="UP000009136">
    <property type="component" value="Chromosome 25"/>
</dbReference>
<dbReference type="Bgee" id="ENSBTAG00000006457">
    <property type="expression patterns" value="Expressed in semen and 93 other cell types or tissues"/>
</dbReference>
<dbReference type="GO" id="GO:0005737">
    <property type="term" value="C:cytoplasm"/>
    <property type="evidence" value="ECO:0000318"/>
    <property type="project" value="GO_Central"/>
</dbReference>
<dbReference type="GO" id="GO:0030492">
    <property type="term" value="F:hemoglobin binding"/>
    <property type="evidence" value="ECO:0007669"/>
    <property type="project" value="InterPro"/>
</dbReference>
<dbReference type="GO" id="GO:0030218">
    <property type="term" value="P:erythrocyte differentiation"/>
    <property type="evidence" value="ECO:0000318"/>
    <property type="project" value="GO_Central"/>
</dbReference>
<dbReference type="GO" id="GO:0006457">
    <property type="term" value="P:protein folding"/>
    <property type="evidence" value="ECO:0000318"/>
    <property type="project" value="GO_Central"/>
</dbReference>
<dbReference type="GO" id="GO:0050821">
    <property type="term" value="P:protein stabilization"/>
    <property type="evidence" value="ECO:0000318"/>
    <property type="project" value="GO_Central"/>
</dbReference>
<dbReference type="FunFam" id="1.20.58.420:FF:000002">
    <property type="entry name" value="Alpha-hemoglobin-stabilizing protein"/>
    <property type="match status" value="1"/>
</dbReference>
<dbReference type="Gene3D" id="1.20.58.420">
    <property type="entry name" value="AHSP"/>
    <property type="match status" value="1"/>
</dbReference>
<dbReference type="InterPro" id="IPR015317">
    <property type="entry name" value="A_Hb_stabilising_prot"/>
</dbReference>
<dbReference type="InterPro" id="IPR036468">
    <property type="entry name" value="AHSP_sf"/>
</dbReference>
<dbReference type="PANTHER" id="PTHR15914">
    <property type="entry name" value="ALPHA-HEMOGLOBIN-STABILIZING PROTEIN"/>
    <property type="match status" value="1"/>
</dbReference>
<dbReference type="PANTHER" id="PTHR15914:SF0">
    <property type="entry name" value="ALPHA-HEMOGLOBIN-STABILIZING PROTEIN"/>
    <property type="match status" value="1"/>
</dbReference>
<dbReference type="Pfam" id="PF09236">
    <property type="entry name" value="AHSP"/>
    <property type="match status" value="1"/>
</dbReference>
<dbReference type="SUPFAM" id="SSF109751">
    <property type="entry name" value="Alpha-hemoglobin stabilizing protein AHSP"/>
    <property type="match status" value="1"/>
</dbReference>
<proteinExistence type="inferred from homology"/>
<reference key="1">
    <citation type="submission" date="2002-02" db="EMBL/GenBank/DDBJ databases">
        <authorList>
            <person name="Miele G."/>
            <person name="Manson J."/>
            <person name="Clinton M."/>
        </authorList>
    </citation>
    <scope>NUCLEOTIDE SEQUENCE [MRNA]</scope>
</reference>
<reference key="2">
    <citation type="submission" date="2007-04" db="EMBL/GenBank/DDBJ databases">
        <title>Bovine AHSP 5'-flanking.</title>
        <authorList>
            <person name="Otsuka Y."/>
            <person name="Ito D."/>
            <person name="Katsuoka K."/>
            <person name="Arashiki N."/>
            <person name="Inaba M."/>
        </authorList>
    </citation>
    <scope>NUCLEOTIDE SEQUENCE [GENOMIC DNA]</scope>
</reference>
<reference key="3">
    <citation type="submission" date="2005-08" db="EMBL/GenBank/DDBJ databases">
        <authorList>
            <consortium name="NIH - Mammalian Gene Collection (MGC) project"/>
        </authorList>
    </citation>
    <scope>NUCLEOTIDE SEQUENCE [LARGE SCALE MRNA]</scope>
    <source>
        <strain>Hereford</strain>
        <tissue>Fetal liver</tissue>
    </source>
</reference>
<reference key="4">
    <citation type="journal article" date="2001" name="Nat. Med.">
        <title>A novel erythroid-specific marker of transmissible spongiform encephalopathies.</title>
        <authorList>
            <person name="Miele G."/>
            <person name="Manson J."/>
            <person name="Clinton M."/>
        </authorList>
    </citation>
    <scope>NUCLEOTIDE SEQUENCE [GENOMIC DNA] OF 34-89</scope>
</reference>
<name>AHSP_BOVIN</name>
<evidence type="ECO:0000250" key="1"/>
<evidence type="ECO:0000305" key="2"/>
<accession>Q865F8</accession>
<accession>A4PJ03</accession>
<accession>Q3ZBI2</accession>
<accession>Q9BDR6</accession>
<gene>
    <name type="primary">AHSP</name>
    <name type="synonym">ERAF</name>
</gene>
<comment type="function">
    <text evidence="1">Acts as a chaperone to prevent the harmful aggregation of alpha-hemoglobin during normal erythroid cell development. Specifically protects free alpha-hemoglobin from precipitation (By similarity).</text>
</comment>
<comment type="subunit">
    <text evidence="1">Monomer. Forms a heterodimer with free alpha-hemoglobin. Does not bind beta-hemoglobin nor alpha(2)beta(2) hemoglobin A (By similarity).</text>
</comment>
<comment type="subcellular location">
    <subcellularLocation>
        <location evidence="1">Cytoplasm</location>
    </subcellularLocation>
</comment>
<comment type="similarity">
    <text evidence="2">Belongs to the AHSP family.</text>
</comment>
<organism>
    <name type="scientific">Bos taurus</name>
    <name type="common">Bovine</name>
    <dbReference type="NCBI Taxonomy" id="9913"/>
    <lineage>
        <taxon>Eukaryota</taxon>
        <taxon>Metazoa</taxon>
        <taxon>Chordata</taxon>
        <taxon>Craniata</taxon>
        <taxon>Vertebrata</taxon>
        <taxon>Euteleostomi</taxon>
        <taxon>Mammalia</taxon>
        <taxon>Eutheria</taxon>
        <taxon>Laurasiatheria</taxon>
        <taxon>Artiodactyla</taxon>
        <taxon>Ruminantia</taxon>
        <taxon>Pecora</taxon>
        <taxon>Bovidae</taxon>
        <taxon>Bovinae</taxon>
        <taxon>Bos</taxon>
    </lineage>
</organism>
<sequence>MALIQTNKDLISKGIKEFNILLNQQVFSDPAISEEAMVTVVNDWVSFYINYYKKQLSGEQDEQDKALQEFRQELNTLSASFLDKYRNFLKSS</sequence>
<keyword id="KW-0143">Chaperone</keyword>
<keyword id="KW-0963">Cytoplasm</keyword>
<keyword id="KW-1185">Reference proteome</keyword>
<feature type="chain" id="PRO_0000064508" description="Alpha-hemoglobin-stabilizing protein">
    <location>
        <begin position="1"/>
        <end position="92"/>
    </location>
</feature>
<feature type="sequence conflict" description="In Ref. 4; AAK28063." evidence="2" ref="4">
    <original>A</original>
    <variation>D</variation>
    <location>
        <position position="36"/>
    </location>
</feature>
<feature type="sequence conflict" description="In Ref. 4; AAK28063." evidence="2" ref="4">
    <original>D</original>
    <variation>A</variation>
    <location>
        <position position="83"/>
    </location>
</feature>
<feature type="sequence conflict" description="In Ref. 4; AAK28063." evidence="2" ref="4">
    <original>N</original>
    <variation>P</variation>
    <location>
        <position position="87"/>
    </location>
</feature>
<protein>
    <recommendedName>
        <fullName>Alpha-hemoglobin-stabilizing protein</fullName>
    </recommendedName>
    <alternativeName>
        <fullName>Erythroid-associated factor</fullName>
    </alternativeName>
</protein>